<sequence length="151" mass="17576">MKCPFCSSDNTRVIDSRPADDNSSIRRRRLCDDCGKRFTTYEKVETIPLIVIKKDNNREQYDRSKIEKGVLLACHKRPISADTISKLVDEVEIEIFAREEKEISTSLIGELIMDRLKDLDAVAYVRFASVYREFKDVNTFMTELKKMLDTK</sequence>
<feature type="chain" id="PRO_1000206116" description="Transcriptional repressor NrdR">
    <location>
        <begin position="1"/>
        <end position="151"/>
    </location>
</feature>
<feature type="domain" description="ATP-cone" evidence="1">
    <location>
        <begin position="49"/>
        <end position="139"/>
    </location>
</feature>
<feature type="zinc finger region" evidence="1">
    <location>
        <begin position="3"/>
        <end position="34"/>
    </location>
</feature>
<accession>C4Z8V7</accession>
<protein>
    <recommendedName>
        <fullName evidence="1">Transcriptional repressor NrdR</fullName>
    </recommendedName>
</protein>
<proteinExistence type="inferred from homology"/>
<keyword id="KW-0067">ATP-binding</keyword>
<keyword id="KW-0238">DNA-binding</keyword>
<keyword id="KW-0479">Metal-binding</keyword>
<keyword id="KW-0547">Nucleotide-binding</keyword>
<keyword id="KW-0678">Repressor</keyword>
<keyword id="KW-0804">Transcription</keyword>
<keyword id="KW-0805">Transcription regulation</keyword>
<keyword id="KW-0862">Zinc</keyword>
<keyword id="KW-0863">Zinc-finger</keyword>
<dbReference type="EMBL" id="CP001107">
    <property type="protein sequence ID" value="ACR75188.1"/>
    <property type="molecule type" value="Genomic_DNA"/>
</dbReference>
<dbReference type="RefSeq" id="WP_012742287.1">
    <property type="nucleotide sequence ID" value="NC_012781.1"/>
</dbReference>
<dbReference type="SMR" id="C4Z8V7"/>
<dbReference type="STRING" id="515619.EUBREC_1429"/>
<dbReference type="PaxDb" id="515619-EUBREC_1429"/>
<dbReference type="GeneID" id="86988251"/>
<dbReference type="KEGG" id="ere:EUBREC_1429"/>
<dbReference type="HOGENOM" id="CLU_108412_0_0_9"/>
<dbReference type="Proteomes" id="UP000001477">
    <property type="component" value="Chromosome"/>
</dbReference>
<dbReference type="GO" id="GO:0005524">
    <property type="term" value="F:ATP binding"/>
    <property type="evidence" value="ECO:0007669"/>
    <property type="project" value="UniProtKB-KW"/>
</dbReference>
<dbReference type="GO" id="GO:0003677">
    <property type="term" value="F:DNA binding"/>
    <property type="evidence" value="ECO:0007669"/>
    <property type="project" value="UniProtKB-KW"/>
</dbReference>
<dbReference type="GO" id="GO:0008270">
    <property type="term" value="F:zinc ion binding"/>
    <property type="evidence" value="ECO:0007669"/>
    <property type="project" value="UniProtKB-UniRule"/>
</dbReference>
<dbReference type="GO" id="GO:0045892">
    <property type="term" value="P:negative regulation of DNA-templated transcription"/>
    <property type="evidence" value="ECO:0007669"/>
    <property type="project" value="UniProtKB-UniRule"/>
</dbReference>
<dbReference type="HAMAP" id="MF_00440">
    <property type="entry name" value="NrdR"/>
    <property type="match status" value="1"/>
</dbReference>
<dbReference type="InterPro" id="IPR005144">
    <property type="entry name" value="ATP-cone_dom"/>
</dbReference>
<dbReference type="InterPro" id="IPR055173">
    <property type="entry name" value="NrdR-like_N"/>
</dbReference>
<dbReference type="InterPro" id="IPR003796">
    <property type="entry name" value="RNR_NrdR-like"/>
</dbReference>
<dbReference type="NCBIfam" id="TIGR00244">
    <property type="entry name" value="transcriptional regulator NrdR"/>
    <property type="match status" value="1"/>
</dbReference>
<dbReference type="PANTHER" id="PTHR30455">
    <property type="entry name" value="TRANSCRIPTIONAL REPRESSOR NRDR"/>
    <property type="match status" value="1"/>
</dbReference>
<dbReference type="PANTHER" id="PTHR30455:SF2">
    <property type="entry name" value="TRANSCRIPTIONAL REPRESSOR NRDR"/>
    <property type="match status" value="1"/>
</dbReference>
<dbReference type="Pfam" id="PF03477">
    <property type="entry name" value="ATP-cone"/>
    <property type="match status" value="1"/>
</dbReference>
<dbReference type="Pfam" id="PF22811">
    <property type="entry name" value="Zn_ribbon_NrdR"/>
    <property type="match status" value="1"/>
</dbReference>
<dbReference type="PROSITE" id="PS51161">
    <property type="entry name" value="ATP_CONE"/>
    <property type="match status" value="1"/>
</dbReference>
<evidence type="ECO:0000255" key="1">
    <source>
        <dbReference type="HAMAP-Rule" id="MF_00440"/>
    </source>
</evidence>
<gene>
    <name evidence="1" type="primary">nrdR</name>
    <name type="ordered locus">EUBREC_1429</name>
</gene>
<reference key="1">
    <citation type="journal article" date="2009" name="Proc. Natl. Acad. Sci. U.S.A.">
        <title>Characterizing a model human gut microbiota composed of members of its two dominant bacterial phyla.</title>
        <authorList>
            <person name="Mahowald M.A."/>
            <person name="Rey F.E."/>
            <person name="Seedorf H."/>
            <person name="Turnbaugh P.J."/>
            <person name="Fulton R.S."/>
            <person name="Wollam A."/>
            <person name="Shah N."/>
            <person name="Wang C."/>
            <person name="Magrini V."/>
            <person name="Wilson R.K."/>
            <person name="Cantarel B.L."/>
            <person name="Coutinho P.M."/>
            <person name="Henrissat B."/>
            <person name="Crock L.W."/>
            <person name="Russell A."/>
            <person name="Verberkmoes N.C."/>
            <person name="Hettich R.L."/>
            <person name="Gordon J.I."/>
        </authorList>
    </citation>
    <scope>NUCLEOTIDE SEQUENCE [LARGE SCALE GENOMIC DNA]</scope>
    <source>
        <strain>ATCC 33656 / DSM 3377 / JCM 17463 / KCTC 5835 / LMG 30912 / VPI 0990</strain>
    </source>
</reference>
<name>NRDR_AGARV</name>
<organism>
    <name type="scientific">Agathobacter rectalis (strain ATCC 33656 / DSM 3377 / JCM 17463 / KCTC 5835 / VPI 0990)</name>
    <name type="common">Eubacterium rectale</name>
    <dbReference type="NCBI Taxonomy" id="515619"/>
    <lineage>
        <taxon>Bacteria</taxon>
        <taxon>Bacillati</taxon>
        <taxon>Bacillota</taxon>
        <taxon>Clostridia</taxon>
        <taxon>Lachnospirales</taxon>
        <taxon>Lachnospiraceae</taxon>
        <taxon>Agathobacter</taxon>
    </lineage>
</organism>
<comment type="function">
    <text evidence="1">Negatively regulates transcription of bacterial ribonucleotide reductase nrd genes and operons by binding to NrdR-boxes.</text>
</comment>
<comment type="cofactor">
    <cofactor evidence="1">
        <name>Zn(2+)</name>
        <dbReference type="ChEBI" id="CHEBI:29105"/>
    </cofactor>
    <text evidence="1">Binds 1 zinc ion.</text>
</comment>
<comment type="similarity">
    <text evidence="1">Belongs to the NrdR family.</text>
</comment>